<comment type="function">
    <text evidence="2 6 9 11 12 13 15 16 17">Transcription coregulator that can have both coactivator and corepressor functions (PubMed:15031292, PubMed:18468999, PubMed:18922798, PubMed:25342469, PubMed:33938178). Adapter protein that forms a transcriptionally active complex with the gamma-secretase-derived amyloid precursor protein (APP) intracellular domain (PubMed:15031292, PubMed:18468999, PubMed:18922798, PubMed:25342469). Plays a central role in the response to DNA damage by translocating to the nucleus and inducing apoptosis (PubMed:15031292, PubMed:18468999, PubMed:18922798, PubMed:25342469). May act by specifically recognizing and binding histone H2AX phosphorylated on 'Tyr-142' (H2AXY142ph) at double-strand breaks (DSBs), recruiting other pro-apoptosis factors such as MAPK8/JNK1 (PubMed:19234442). Required for histone H4 acetylation at double-strand breaks (DSBs) (PubMed:19234442). Its ability to specifically bind modified histones and chromatin modifying enzymes such as KAT5/TIP60, probably explains its transcription activation activity (PubMed:33938178). Functions in association with TSHZ3, SET and HDAC factors as a transcriptional repressor, that inhibits the expression of CASP4 (PubMed:19343227). Associates with chromatin in a region surrounding the CASP4 transcriptional start site(s) (PubMed:19343227). Involved in hippocampal neurite branching and neuromuscular junction formation, as a result plays a role in spatial memory functioning (By similarity). Plays a role in the maintenance of lens transparency (By similarity). May play a role in muscle cell strength (By similarity). Acts as a molecular adapter that functions in neurite outgrowth by activating the RAC1-ARF6 axis upon insulin treatment (PubMed:36250347).</text>
</comment>
<comment type="subunit">
    <text evidence="2 6 7 8 9 10 11 12 13 15 16 17">Component of a complex, at least composed of APBB1, RASD1/DEXRAS1 and APP (PubMed:18468999, PubMed:18833287, PubMed:18922798). Interacts (via PID domain 2) with APP (with the intracellular domain of the amyloid-beta precursor protein) (PubMed:18468999, PubMed:18833287). Interacts (via PID domain 2) with RASD1/DEXRAS1; impairs the transcription activation activity (PubMed:18922798). Interacts (via PID domain 1) with KAT5/TIP60 (PubMed:33938178). Interacts (via the WW domain) with the proline-rich region of APBB1IP (By similarity). Interacts with TSHZ1 and TSHZ2 (By similarity). Interacts (via the WW domain) with histone H2AX (when phosphorylated on 'Tyr-142') and the proline-rich region of ENAH (PubMed:17686488). Interacts with MAPK8 (PubMed:19234442). Interacts (via PID domain 1) with TSHZ3 (via homeobox domain) (PubMed:19343227). Interacts with SET (PubMed:19343227). Found in a trimeric complex with HDAC1 and TSHZ3; the interaction between HDAC1 and APBB1 is mediated by TSHZ3 (PubMed:19343227). Interacts (via WWW domain) with NEK6 (PubMed:17512906). Interacts (via WWW domain) with ABL1 (PubMed:15031292). Interacts with RNF157 (PubMed:25342469). Interacts with ARF6 (PubMed:36250347).</text>
</comment>
<comment type="interaction">
    <interactant intactId="EBI-81694">
        <id>O00213</id>
    </interactant>
    <interactant intactId="EBI-79306">
        <id>Q06481</id>
        <label>APLP2</label>
    </interactant>
    <organismsDiffer>false</organismsDiffer>
    <experiments>3</experiments>
</comment>
<comment type="interaction">
    <interactant intactId="EBI-81694">
        <id>O00213</id>
    </interactant>
    <interactant intactId="EBI-77613">
        <id>P05067</id>
        <label>APP</label>
    </interactant>
    <organismsDiffer>false</organismsDiffer>
    <experiments>10</experiments>
</comment>
<comment type="interaction">
    <interactant intactId="EBI-81694">
        <id>O00213</id>
    </interactant>
    <interactant intactId="EBI-302641">
        <id>P05067-4</id>
        <label>APP</label>
    </interactant>
    <organismsDiffer>false</organismsDiffer>
    <experiments>5</experiments>
</comment>
<comment type="interaction">
    <interactant intactId="EBI-81694">
        <id>O00213</id>
    </interactant>
    <interactant intactId="EBI-638181">
        <id>P62330</id>
        <label>ARF6</label>
    </interactant>
    <organismsDiffer>false</organismsDiffer>
    <experiments>9</experiments>
</comment>
<comment type="interaction">
    <interactant intactId="EBI-81694">
        <id>O00213</id>
    </interactant>
    <interactant intactId="EBI-297353">
        <id>P00533</id>
        <label>EGFR</label>
    </interactant>
    <organismsDiffer>false</organismsDiffer>
    <experiments>4</experiments>
</comment>
<comment type="interaction">
    <interactant intactId="EBI-81694">
        <id>O00213</id>
    </interactant>
    <interactant intactId="EBI-641062">
        <id>P04626</id>
        <label>ERBB2</label>
    </interactant>
    <organismsDiffer>false</organismsDiffer>
    <experiments>2</experiments>
</comment>
<comment type="interaction">
    <interactant intactId="EBI-81694">
        <id>O00213</id>
    </interactant>
    <interactant intactId="EBI-1046087">
        <id>Q07954</id>
        <label>LRP1</label>
    </interactant>
    <organismsDiffer>false</organismsDiffer>
    <experiments>4</experiments>
</comment>
<comment type="interaction">
    <interactant intactId="EBI-81694">
        <id>O00213</id>
    </interactant>
    <interactant intactId="EBI-466194">
        <id>Q02563</id>
        <label>Sv2a</label>
    </interactant>
    <organismsDiffer>true</organismsDiffer>
    <experiments>3</experiments>
</comment>
<comment type="interaction">
    <interactant intactId="EBI-13307975">
        <id>O00213-2</id>
    </interactant>
    <interactant intactId="EBI-77613">
        <id>P05067</id>
        <label>APP</label>
    </interactant>
    <organismsDiffer>false</organismsDiffer>
    <experiments>6</experiments>
</comment>
<comment type="interaction">
    <interactant intactId="EBI-13307975">
        <id>O00213-2</id>
    </interactant>
    <interactant intactId="EBI-14405236">
        <id>Q86YB2</id>
        <label>DHX8</label>
    </interactant>
    <organismsDiffer>false</organismsDiffer>
    <experiments>3</experiments>
</comment>
<comment type="interaction">
    <interactant intactId="EBI-13307975">
        <id>O00213-2</id>
    </interactant>
    <interactant intactId="EBI-724767">
        <id>Q8NFZ0</id>
        <label>FBH1</label>
    </interactant>
    <organismsDiffer>false</organismsDiffer>
    <experiments>3</experiments>
</comment>
<comment type="interaction">
    <interactant intactId="EBI-13307975">
        <id>O00213-2</id>
    </interactant>
    <interactant intactId="EBI-399080">
        <id>Q92993</id>
        <label>KAT5</label>
    </interactant>
    <organismsDiffer>false</organismsDiffer>
    <experiments>3</experiments>
</comment>
<comment type="interaction">
    <interactant intactId="EBI-13307975">
        <id>O00213-2</id>
    </interactant>
    <interactant intactId="EBI-347619">
        <id>O15116</id>
        <label>LSM1</label>
    </interactant>
    <organismsDiffer>false</organismsDiffer>
    <experiments>3</experiments>
</comment>
<comment type="interaction">
    <interactant intactId="EBI-13307975">
        <id>O00213-2</id>
    </interactant>
    <interactant intactId="EBI-745901">
        <id>Q14141</id>
        <label>SEPTIN6</label>
    </interactant>
    <organismsDiffer>false</organismsDiffer>
    <experiments>3</experiments>
</comment>
<comment type="interaction">
    <interactant intactId="EBI-13307975">
        <id>O00213-2</id>
    </interactant>
    <interactant intactId="EBI-25831036">
        <id>Q99720-4</id>
        <label>SIGMAR1</label>
    </interactant>
    <organismsDiffer>false</organismsDiffer>
    <experiments>3</experiments>
</comment>
<comment type="interaction">
    <interactant intactId="EBI-13307975">
        <id>O00213-2</id>
    </interactant>
    <interactant intactId="EBI-9087806">
        <id>O95416</id>
        <label>SOX14</label>
    </interactant>
    <organismsDiffer>false</organismsDiffer>
    <experiments>3</experiments>
</comment>
<comment type="subcellular location">
    <subcellularLocation>
        <location evidence="9">Cell membrane</location>
    </subcellularLocation>
    <subcellularLocation>
        <location evidence="9">Cytoplasm</location>
    </subcellularLocation>
    <subcellularLocation>
        <location evidence="6 9 11 13">Nucleus</location>
    </subcellularLocation>
    <subcellularLocation>
        <location evidence="1">Cell projection</location>
        <location evidence="1">Growth cone</location>
    </subcellularLocation>
    <subcellularLocation>
        <location evidence="7">Nucleus speckle</location>
    </subcellularLocation>
    <text evidence="1 7 9 13">Colocalizes with TSHZ3 in axonal growth cone (By similarity). Colocalizes with TSHZ3 in the nucleus (PubMed:19343227). In normal conditions, it mainly localizes to the cytoplasm, while a small fraction is tethered to the cell membrane via its interaction with APP (PubMed:18468999). Following exposure to DNA damaging agents, it is released from cell membrane and translocates to the nucleus (PubMed:18468999). Nuclear translocation is under the regulation of APP (PubMed:18468999). Colocalizes with NEK6 at the nuclear speckles (PubMed:17512906). Phosphorylation at Ser-610 by SGK1 promotes its localization to the nucleus (By similarity).</text>
</comment>
<comment type="alternative products">
    <event type="alternative splicing"/>
    <isoform>
        <id>O00213-1</id>
        <name>1</name>
        <sequence type="displayed"/>
    </isoform>
    <isoform>
        <id>O00213-2</id>
        <name>2</name>
        <sequence type="described" ref="VSP_011658"/>
    </isoform>
    <isoform>
        <id>O00213-3</id>
        <name>3</name>
        <sequence type="described" ref="VSP_045326 VSP_045327 VSP_011658"/>
    </isoform>
    <isoform>
        <id>O00213-4</id>
        <name>4</name>
        <name>p60Fe65</name>
        <sequence type="described" ref="VSP_047459"/>
    </isoform>
    <isoform>
        <id>O00213-5</id>
        <name>5</name>
        <sequence type="described" ref="VSP_045326 VSP_045327"/>
    </isoform>
    <isoform>
        <id>O00213-6</id>
        <name>6</name>
        <sequence type="described" ref="VSP_054709"/>
    </isoform>
</comment>
<comment type="tissue specificity">
    <text evidence="13">Highly expressed in brain; strongly reduced in post-mortem elderly subjects with Alzheimer disease.</text>
</comment>
<comment type="tissue specificity">
    <molecule>Isoform 4</molecule>
    <text evidence="14">Expressed preferentially in the brain.</text>
</comment>
<comment type="PTM">
    <text evidence="1 6 11 17">Phosphorylation at Ser-610 by SGK1 promotes its localization to the nucleus (By similarity). Phosphorylated following nuclear translocation (PubMed:15031292, PubMed:18922798). Phosphorylation at Tyr-547 by ABL1 enhances transcriptional activation activity and reduces the affinity for RASD1/DEXRAS1 (PubMed:15031292, PubMed:18922798). Phosphorylated at Ser-459 by PKC upon insulin activation (PubMed:36250347).</text>
</comment>
<comment type="PTM">
    <text evidence="16">Acetylation at Lys-204 and Lys-701 by KAT5 promotes its transcription activator activity.</text>
</comment>
<comment type="PTM">
    <text evidence="15">Polyubiquitination by RNF157 leads to degradation by the proteasome (PubMed:25342469).</text>
</comment>
<comment type="sequence caution" evidence="23">
    <conflict type="erroneous initiation">
        <sequence resource="EMBL-CDS" id="CAD98057"/>
    </conflict>
    <text>Extended N-terminus.</text>
</comment>
<accession>O00213</accession>
<accession>A1E379</accession>
<accession>A6NH82</accession>
<accession>A6NL69</accession>
<accession>B7Z1J5</accession>
<accession>B7Z1J6</accession>
<accession>B7Z2Y0</accession>
<accession>D3DQT2</accession>
<accession>Q7Z324</accession>
<accession>Q96A93</accession>
<accession>V9GYK0</accession>
<accession>V9GYT4</accession>
<dbReference type="EMBL" id="L77864">
    <property type="protein sequence ID" value="AAB93631.1"/>
    <property type="molecule type" value="mRNA"/>
</dbReference>
<dbReference type="EMBL" id="AF029234">
    <property type="protein sequence ID" value="AAC79942.1"/>
    <property type="molecule type" value="Genomic_DNA"/>
</dbReference>
<dbReference type="EMBL" id="AF047835">
    <property type="protein sequence ID" value="AAC79942.1"/>
    <property type="status" value="JOINED"/>
    <property type="molecule type" value="Genomic_DNA"/>
</dbReference>
<dbReference type="EMBL" id="EF103274">
    <property type="protein sequence ID" value="ABL07489.3"/>
    <property type="molecule type" value="mRNA"/>
</dbReference>
<dbReference type="EMBL" id="AK293550">
    <property type="protein sequence ID" value="BAH11531.1"/>
    <property type="molecule type" value="mRNA"/>
</dbReference>
<dbReference type="EMBL" id="AK293554">
    <property type="protein sequence ID" value="BAH11532.1"/>
    <property type="molecule type" value="mRNA"/>
</dbReference>
<dbReference type="EMBL" id="AK293643">
    <property type="protein sequence ID" value="BAH11554.1"/>
    <property type="molecule type" value="mRNA"/>
</dbReference>
<dbReference type="EMBL" id="AK295241">
    <property type="protein sequence ID" value="BAH12016.1"/>
    <property type="molecule type" value="mRNA"/>
</dbReference>
<dbReference type="EMBL" id="BX538185">
    <property type="protein sequence ID" value="CAD98057.1"/>
    <property type="status" value="ALT_INIT"/>
    <property type="molecule type" value="mRNA"/>
</dbReference>
<dbReference type="EMBL" id="AC068733">
    <property type="status" value="NOT_ANNOTATED_CDS"/>
    <property type="molecule type" value="Genomic_DNA"/>
</dbReference>
<dbReference type="EMBL" id="AC084337">
    <property type="status" value="NOT_ANNOTATED_CDS"/>
    <property type="molecule type" value="Genomic_DNA"/>
</dbReference>
<dbReference type="EMBL" id="CH471064">
    <property type="protein sequence ID" value="EAW68723.1"/>
    <property type="molecule type" value="Genomic_DNA"/>
</dbReference>
<dbReference type="EMBL" id="CH471064">
    <property type="protein sequence ID" value="EAW68724.1"/>
    <property type="molecule type" value="Genomic_DNA"/>
</dbReference>
<dbReference type="EMBL" id="BC010854">
    <property type="protein sequence ID" value="AAH10854.1"/>
    <property type="molecule type" value="mRNA"/>
</dbReference>
<dbReference type="CCDS" id="CCDS31410.1">
    <molecule id="O00213-2"/>
</dbReference>
<dbReference type="CCDS" id="CCDS58114.1">
    <molecule id="O00213-3"/>
</dbReference>
<dbReference type="CCDS" id="CCDS66015.1">
    <molecule id="O00213-4"/>
</dbReference>
<dbReference type="CCDS" id="CCDS66016.1">
    <molecule id="O00213-6"/>
</dbReference>
<dbReference type="CCDS" id="CCDS66017.1">
    <molecule id="O00213-5"/>
</dbReference>
<dbReference type="CCDS" id="CCDS66018.1">
    <molecule id="O00213-1"/>
</dbReference>
<dbReference type="RefSeq" id="NP_001155.1">
    <molecule id="O00213-1"/>
    <property type="nucleotide sequence ID" value="NM_001164.5"/>
</dbReference>
<dbReference type="RefSeq" id="NP_001244248.1">
    <molecule id="O00213-5"/>
    <property type="nucleotide sequence ID" value="NM_001257319.3"/>
</dbReference>
<dbReference type="RefSeq" id="NP_001244249.1">
    <molecule id="O00213-4"/>
    <property type="nucleotide sequence ID" value="NM_001257320.2"/>
</dbReference>
<dbReference type="RefSeq" id="NP_001244250.1">
    <molecule id="O00213-4"/>
    <property type="nucleotide sequence ID" value="NM_001257321.2"/>
</dbReference>
<dbReference type="RefSeq" id="NP_001244252.1">
    <molecule id="O00213-3"/>
    <property type="nucleotide sequence ID" value="NM_001257323.3"/>
</dbReference>
<dbReference type="RefSeq" id="NP_001244254.1">
    <molecule id="O00213-6"/>
    <property type="nucleotide sequence ID" value="NM_001257325.3"/>
</dbReference>
<dbReference type="RefSeq" id="NP_001244255.1">
    <molecule id="O00213-4"/>
    <property type="nucleotide sequence ID" value="NM_001257326.2"/>
</dbReference>
<dbReference type="RefSeq" id="NP_663722.1">
    <molecule id="O00213-2"/>
    <property type="nucleotide sequence ID" value="NM_145689.3"/>
</dbReference>
<dbReference type="RefSeq" id="XP_011518342.1">
    <property type="nucleotide sequence ID" value="XM_011520040.2"/>
</dbReference>
<dbReference type="RefSeq" id="XP_016873130.1">
    <property type="nucleotide sequence ID" value="XM_017017641.1"/>
</dbReference>
<dbReference type="PDB" id="2E45">
    <property type="method" value="NMR"/>
    <property type="chains" value="A=241-290"/>
</dbReference>
<dbReference type="PDB" id="2HO2">
    <property type="method" value="X-ray"/>
    <property type="resolution" value="1.33 A"/>
    <property type="chains" value="A=253-289"/>
</dbReference>
<dbReference type="PDB" id="2IDH">
    <property type="method" value="X-ray"/>
    <property type="resolution" value="2.28 A"/>
    <property type="chains" value="A/B/C/D/E/F/G/H=253-289"/>
</dbReference>
<dbReference type="PDB" id="2OEI">
    <property type="method" value="X-ray"/>
    <property type="resolution" value="1.35 A"/>
    <property type="chains" value="A=253-289"/>
</dbReference>
<dbReference type="PDB" id="3D8D">
    <property type="method" value="X-ray"/>
    <property type="resolution" value="2.20 A"/>
    <property type="chains" value="A/B=366-505"/>
</dbReference>
<dbReference type="PDB" id="3D8E">
    <property type="method" value="X-ray"/>
    <property type="resolution" value="2.80 A"/>
    <property type="chains" value="A/B/C/D=366-505"/>
</dbReference>
<dbReference type="PDB" id="3D8F">
    <property type="method" value="X-ray"/>
    <property type="resolution" value="2.70 A"/>
    <property type="chains" value="A/B/C/D=366-505"/>
</dbReference>
<dbReference type="PDB" id="3DXC">
    <property type="method" value="X-ray"/>
    <property type="resolution" value="2.10 A"/>
    <property type="chains" value="A/C=534-667"/>
</dbReference>
<dbReference type="PDB" id="3DXD">
    <property type="method" value="X-ray"/>
    <property type="resolution" value="2.20 A"/>
    <property type="chains" value="A/C=534-667"/>
</dbReference>
<dbReference type="PDB" id="3DXE">
    <property type="method" value="X-ray"/>
    <property type="resolution" value="2.00 A"/>
    <property type="chains" value="A/C=534-667"/>
</dbReference>
<dbReference type="PDB" id="5NQH">
    <property type="method" value="X-ray"/>
    <property type="resolution" value="2.60 A"/>
    <property type="chains" value="A/B/C/D=534-667"/>
</dbReference>
<dbReference type="PDBsum" id="2E45"/>
<dbReference type="PDBsum" id="2HO2"/>
<dbReference type="PDBsum" id="2IDH"/>
<dbReference type="PDBsum" id="2OEI"/>
<dbReference type="PDBsum" id="3D8D"/>
<dbReference type="PDBsum" id="3D8E"/>
<dbReference type="PDBsum" id="3D8F"/>
<dbReference type="PDBsum" id="3DXC"/>
<dbReference type="PDBsum" id="3DXD"/>
<dbReference type="PDBsum" id="3DXE"/>
<dbReference type="PDBsum" id="5NQH"/>
<dbReference type="BMRB" id="O00213"/>
<dbReference type="SMR" id="O00213"/>
<dbReference type="BioGRID" id="106819">
    <property type="interactions" value="194"/>
</dbReference>
<dbReference type="CORUM" id="O00213"/>
<dbReference type="DIP" id="DIP-30903N"/>
<dbReference type="ELM" id="O00213"/>
<dbReference type="FunCoup" id="O00213">
    <property type="interactions" value="944"/>
</dbReference>
<dbReference type="IntAct" id="O00213">
    <property type="interactions" value="187"/>
</dbReference>
<dbReference type="MINT" id="O00213"/>
<dbReference type="STRING" id="9606.ENSP00000477213"/>
<dbReference type="GlyCosmos" id="O00213">
    <property type="glycosylation" value="1 site, 1 glycan"/>
</dbReference>
<dbReference type="GlyGen" id="O00213">
    <property type="glycosylation" value="1 site, 1 O-linked glycan (1 site)"/>
</dbReference>
<dbReference type="iPTMnet" id="O00213"/>
<dbReference type="PhosphoSitePlus" id="O00213"/>
<dbReference type="BioMuta" id="APBB1"/>
<dbReference type="jPOST" id="O00213"/>
<dbReference type="MassIVE" id="O00213"/>
<dbReference type="PaxDb" id="9606-ENSP00000477213"/>
<dbReference type="PeptideAtlas" id="O00213"/>
<dbReference type="ProteomicsDB" id="47783">
    <molecule id="O00213-1"/>
</dbReference>
<dbReference type="ProteomicsDB" id="47784">
    <molecule id="O00213-2"/>
</dbReference>
<dbReference type="ProteomicsDB" id="6474"/>
<dbReference type="Pumba" id="O00213"/>
<dbReference type="Antibodypedia" id="23808">
    <property type="antibodies" value="405 antibodies from 38 providers"/>
</dbReference>
<dbReference type="DNASU" id="322"/>
<dbReference type="Ensembl" id="ENST00000299402.10">
    <molecule id="O00213-2"/>
    <property type="protein sequence ID" value="ENSP00000299402.6"/>
    <property type="gene ID" value="ENSG00000166313.20"/>
</dbReference>
<dbReference type="Ensembl" id="ENST00000311051.7">
    <molecule id="O00213-2"/>
    <property type="protein sequence ID" value="ENSP00000311912.3"/>
    <property type="gene ID" value="ENSG00000166313.20"/>
</dbReference>
<dbReference type="Ensembl" id="ENST00000530885.5">
    <molecule id="O00213-3"/>
    <property type="protein sequence ID" value="ENSP00000433338.1"/>
    <property type="gene ID" value="ENSG00000166313.20"/>
</dbReference>
<dbReference type="Ensembl" id="ENST00000608394.5">
    <molecule id="O00213-4"/>
    <property type="protein sequence ID" value="ENSP00000476442.1"/>
    <property type="gene ID" value="ENSG00000166313.20"/>
</dbReference>
<dbReference type="Ensembl" id="ENST00000608645.5">
    <molecule id="O00213-4"/>
    <property type="protein sequence ID" value="ENSP00000476646.1"/>
    <property type="gene ID" value="ENSG00000166313.20"/>
</dbReference>
<dbReference type="Ensembl" id="ENST00000608655.6">
    <molecule id="O00213-5"/>
    <property type="protein sequence ID" value="ENSP00000476846.1"/>
    <property type="gene ID" value="ENSG00000166313.20"/>
</dbReference>
<dbReference type="Ensembl" id="ENST00000608704.5">
    <molecule id="O00213-4"/>
    <property type="protein sequence ID" value="ENSP00000476871.1"/>
    <property type="gene ID" value="ENSG00000166313.20"/>
</dbReference>
<dbReference type="Ensembl" id="ENST00000609331.5">
    <molecule id="O00213-6"/>
    <property type="protein sequence ID" value="ENSP00000477069.1"/>
    <property type="gene ID" value="ENSG00000166313.20"/>
</dbReference>
<dbReference type="Ensembl" id="ENST00000609360.6">
    <molecule id="O00213-1"/>
    <property type="protein sequence ID" value="ENSP00000477213.1"/>
    <property type="gene ID" value="ENSG00000166313.20"/>
</dbReference>
<dbReference type="GeneID" id="322"/>
<dbReference type="KEGG" id="hsa:322"/>
<dbReference type="MANE-Select" id="ENST00000609360.6">
    <property type="protein sequence ID" value="ENSP00000477213.1"/>
    <property type="RefSeq nucleotide sequence ID" value="NM_001164.5"/>
    <property type="RefSeq protein sequence ID" value="NP_001155.1"/>
</dbReference>
<dbReference type="UCSC" id="uc001mdb.4">
    <molecule id="O00213-1"/>
    <property type="organism name" value="human"/>
</dbReference>
<dbReference type="AGR" id="HGNC:581"/>
<dbReference type="CTD" id="322"/>
<dbReference type="DisGeNET" id="322"/>
<dbReference type="GeneCards" id="APBB1"/>
<dbReference type="HGNC" id="HGNC:581">
    <property type="gene designation" value="APBB1"/>
</dbReference>
<dbReference type="HPA" id="ENSG00000166313">
    <property type="expression patterns" value="Tissue enhanced (brain)"/>
</dbReference>
<dbReference type="MalaCards" id="APBB1"/>
<dbReference type="MIM" id="602709">
    <property type="type" value="gene"/>
</dbReference>
<dbReference type="neXtProt" id="NX_O00213"/>
<dbReference type="OpenTargets" id="ENSG00000166313"/>
<dbReference type="PharmGKB" id="PA24873"/>
<dbReference type="VEuPathDB" id="HostDB:ENSG00000166313"/>
<dbReference type="eggNOG" id="ENOG502QT08">
    <property type="taxonomic scope" value="Eukaryota"/>
</dbReference>
<dbReference type="GeneTree" id="ENSGT00390000000002"/>
<dbReference type="HOGENOM" id="CLU_021196_0_0_1"/>
<dbReference type="InParanoid" id="O00213"/>
<dbReference type="OMA" id="ENHQDQD"/>
<dbReference type="OrthoDB" id="5969782at2759"/>
<dbReference type="PAN-GO" id="O00213">
    <property type="GO annotations" value="5 GO annotations based on evolutionary models"/>
</dbReference>
<dbReference type="PhylomeDB" id="O00213"/>
<dbReference type="TreeFam" id="TF314331"/>
<dbReference type="PathwayCommons" id="O00213"/>
<dbReference type="Reactome" id="R-HSA-5693565">
    <property type="pathway name" value="Recruitment and ATM-mediated phosphorylation of repair and signaling proteins at DNA double strand breaks"/>
</dbReference>
<dbReference type="SignaLink" id="O00213"/>
<dbReference type="SIGNOR" id="O00213"/>
<dbReference type="BioGRID-ORCS" id="322">
    <property type="hits" value="8 hits in 1157 CRISPR screens"/>
</dbReference>
<dbReference type="ChiTaRS" id="APBB1">
    <property type="organism name" value="human"/>
</dbReference>
<dbReference type="EvolutionaryTrace" id="O00213"/>
<dbReference type="GeneWiki" id="APBB1"/>
<dbReference type="GenomeRNAi" id="322"/>
<dbReference type="Pharos" id="O00213">
    <property type="development level" value="Tbio"/>
</dbReference>
<dbReference type="PRO" id="PR:O00213"/>
<dbReference type="Proteomes" id="UP000005640">
    <property type="component" value="Chromosome 11"/>
</dbReference>
<dbReference type="RNAct" id="O00213">
    <property type="molecule type" value="protein"/>
</dbReference>
<dbReference type="Bgee" id="ENSG00000166313">
    <property type="expression patterns" value="Expressed in right hemisphere of cerebellum and 162 other cell types or tissues"/>
</dbReference>
<dbReference type="ExpressionAtlas" id="O00213">
    <property type="expression patterns" value="baseline and differential"/>
</dbReference>
<dbReference type="GO" id="GO:0005737">
    <property type="term" value="C:cytoplasm"/>
    <property type="evidence" value="ECO:0000314"/>
    <property type="project" value="UniProtKB"/>
</dbReference>
<dbReference type="GO" id="GO:0005783">
    <property type="term" value="C:endoplasmic reticulum"/>
    <property type="evidence" value="ECO:0000314"/>
    <property type="project" value="HPA"/>
</dbReference>
<dbReference type="GO" id="GO:0030426">
    <property type="term" value="C:growth cone"/>
    <property type="evidence" value="ECO:0000314"/>
    <property type="project" value="UniProtKB"/>
</dbReference>
<dbReference type="GO" id="GO:0030027">
    <property type="term" value="C:lamellipodium"/>
    <property type="evidence" value="ECO:0000314"/>
    <property type="project" value="UniProtKB"/>
</dbReference>
<dbReference type="GO" id="GO:0016607">
    <property type="term" value="C:nuclear speck"/>
    <property type="evidence" value="ECO:0007669"/>
    <property type="project" value="UniProtKB-SubCell"/>
</dbReference>
<dbReference type="GO" id="GO:0005654">
    <property type="term" value="C:nucleoplasm"/>
    <property type="evidence" value="ECO:0000304"/>
    <property type="project" value="Reactome"/>
</dbReference>
<dbReference type="GO" id="GO:0005634">
    <property type="term" value="C:nucleus"/>
    <property type="evidence" value="ECO:0000314"/>
    <property type="project" value="UniProtKB"/>
</dbReference>
<dbReference type="GO" id="GO:0005886">
    <property type="term" value="C:plasma membrane"/>
    <property type="evidence" value="ECO:0000314"/>
    <property type="project" value="HPA"/>
</dbReference>
<dbReference type="GO" id="GO:0045202">
    <property type="term" value="C:synapse"/>
    <property type="evidence" value="ECO:0000314"/>
    <property type="project" value="UniProtKB"/>
</dbReference>
<dbReference type="GO" id="GO:0001540">
    <property type="term" value="F:amyloid-beta binding"/>
    <property type="evidence" value="ECO:0000318"/>
    <property type="project" value="GO_Central"/>
</dbReference>
<dbReference type="GO" id="GO:0003682">
    <property type="term" value="F:chromatin binding"/>
    <property type="evidence" value="ECO:0000314"/>
    <property type="project" value="UniProtKB"/>
</dbReference>
<dbReference type="GO" id="GO:0042393">
    <property type="term" value="F:histone binding"/>
    <property type="evidence" value="ECO:0000353"/>
    <property type="project" value="UniProtKB"/>
</dbReference>
<dbReference type="GO" id="GO:0050750">
    <property type="term" value="F:low-density lipoprotein particle receptor binding"/>
    <property type="evidence" value="ECO:0000304"/>
    <property type="project" value="ARUK-UCL"/>
</dbReference>
<dbReference type="GO" id="GO:0060090">
    <property type="term" value="F:molecular adaptor activity"/>
    <property type="evidence" value="ECO:0000314"/>
    <property type="project" value="UniProt"/>
</dbReference>
<dbReference type="GO" id="GO:0070064">
    <property type="term" value="F:proline-rich region binding"/>
    <property type="evidence" value="ECO:0000353"/>
    <property type="project" value="UniProtKB"/>
</dbReference>
<dbReference type="GO" id="GO:0003713">
    <property type="term" value="F:transcription coactivator activity"/>
    <property type="evidence" value="ECO:0000304"/>
    <property type="project" value="ARUK-UCL"/>
</dbReference>
<dbReference type="GO" id="GO:0031625">
    <property type="term" value="F:ubiquitin protein ligase binding"/>
    <property type="evidence" value="ECO:0000353"/>
    <property type="project" value="UniProtKB"/>
</dbReference>
<dbReference type="GO" id="GO:0006915">
    <property type="term" value="P:apoptotic process"/>
    <property type="evidence" value="ECO:0007669"/>
    <property type="project" value="UniProtKB-KW"/>
</dbReference>
<dbReference type="GO" id="GO:0007409">
    <property type="term" value="P:axonogenesis"/>
    <property type="evidence" value="ECO:0000303"/>
    <property type="project" value="UniProtKB"/>
</dbReference>
<dbReference type="GO" id="GO:0006325">
    <property type="term" value="P:chromatin organization"/>
    <property type="evidence" value="ECO:0007669"/>
    <property type="project" value="UniProtKB-KW"/>
</dbReference>
<dbReference type="GO" id="GO:0006974">
    <property type="term" value="P:DNA damage response"/>
    <property type="evidence" value="ECO:0000314"/>
    <property type="project" value="UniProtKB"/>
</dbReference>
<dbReference type="GO" id="GO:1902807">
    <property type="term" value="P:negative regulation of cell cycle G1/S phase transition"/>
    <property type="evidence" value="ECO:0000250"/>
    <property type="project" value="UniProtKB"/>
</dbReference>
<dbReference type="GO" id="GO:0000122">
    <property type="term" value="P:negative regulation of transcription by RNA polymerase II"/>
    <property type="evidence" value="ECO:0000316"/>
    <property type="project" value="ARUK-UCL"/>
</dbReference>
<dbReference type="GO" id="GO:0043065">
    <property type="term" value="P:positive regulation of apoptotic process"/>
    <property type="evidence" value="ECO:0000314"/>
    <property type="project" value="UniProtKB"/>
</dbReference>
<dbReference type="GO" id="GO:0045893">
    <property type="term" value="P:positive regulation of DNA-templated transcription"/>
    <property type="evidence" value="ECO:0000314"/>
    <property type="project" value="UniProtKB"/>
</dbReference>
<dbReference type="GO" id="GO:0010976">
    <property type="term" value="P:positive regulation of neuron projection development"/>
    <property type="evidence" value="ECO:0000314"/>
    <property type="project" value="UniProt"/>
</dbReference>
<dbReference type="GO" id="GO:0050714">
    <property type="term" value="P:positive regulation of protein secretion"/>
    <property type="evidence" value="ECO:0000304"/>
    <property type="project" value="ARUK-UCL"/>
</dbReference>
<dbReference type="GO" id="GO:0045944">
    <property type="term" value="P:positive regulation of transcription by RNA polymerase II"/>
    <property type="evidence" value="ECO:0000304"/>
    <property type="project" value="ARUK-UCL"/>
</dbReference>
<dbReference type="GO" id="GO:0006355">
    <property type="term" value="P:regulation of DNA-templated transcription"/>
    <property type="evidence" value="ECO:0000318"/>
    <property type="project" value="GO_Central"/>
</dbReference>
<dbReference type="GO" id="GO:0007165">
    <property type="term" value="P:signal transduction"/>
    <property type="evidence" value="ECO:0000303"/>
    <property type="project" value="UniProtKB"/>
</dbReference>
<dbReference type="GO" id="GO:0006939">
    <property type="term" value="P:smooth muscle contraction"/>
    <property type="evidence" value="ECO:0000250"/>
    <property type="project" value="UniProtKB"/>
</dbReference>
<dbReference type="CDD" id="cd01272">
    <property type="entry name" value="PTB1_Fe65"/>
    <property type="match status" value="1"/>
</dbReference>
<dbReference type="CDD" id="cd01271">
    <property type="entry name" value="PTB2_Fe65"/>
    <property type="match status" value="1"/>
</dbReference>
<dbReference type="CDD" id="cd00201">
    <property type="entry name" value="WW"/>
    <property type="match status" value="1"/>
</dbReference>
<dbReference type="FunFam" id="2.30.29.30:FF:000019">
    <property type="entry name" value="Amyloid beta (A4) precursor protein-binding, family B, member 1 (Fe65)"/>
    <property type="match status" value="1"/>
</dbReference>
<dbReference type="FunFam" id="2.20.70.10:FF:000003">
    <property type="entry name" value="amyloid beta A4 precursor protein-binding family B member 2"/>
    <property type="match status" value="1"/>
</dbReference>
<dbReference type="FunFam" id="2.30.29.30:FF:000034">
    <property type="entry name" value="amyloid beta A4 precursor protein-binding family B member 2"/>
    <property type="match status" value="1"/>
</dbReference>
<dbReference type="Gene3D" id="2.20.70.10">
    <property type="match status" value="1"/>
</dbReference>
<dbReference type="Gene3D" id="2.30.29.30">
    <property type="entry name" value="Pleckstrin-homology domain (PH domain)/Phosphotyrosine-binding domain (PTB)"/>
    <property type="match status" value="2"/>
</dbReference>
<dbReference type="InterPro" id="IPR039576">
    <property type="entry name" value="APBB1/2/3"/>
</dbReference>
<dbReference type="InterPro" id="IPR011993">
    <property type="entry name" value="PH-like_dom_sf"/>
</dbReference>
<dbReference type="InterPro" id="IPR006020">
    <property type="entry name" value="PTB/PI_dom"/>
</dbReference>
<dbReference type="InterPro" id="IPR001202">
    <property type="entry name" value="WW_dom"/>
</dbReference>
<dbReference type="InterPro" id="IPR036020">
    <property type="entry name" value="WW_dom_sf"/>
</dbReference>
<dbReference type="PANTHER" id="PTHR14058">
    <property type="entry name" value="AMYLOID BETA A4 PRECURSOR PROTEIN-BINDING FAMILY B"/>
    <property type="match status" value="1"/>
</dbReference>
<dbReference type="PANTHER" id="PTHR14058:SF5">
    <property type="entry name" value="AMYLOID BETA PRECURSOR PROTEIN BINDING FAMILY B MEMBER 1"/>
    <property type="match status" value="1"/>
</dbReference>
<dbReference type="Pfam" id="PF00640">
    <property type="entry name" value="PID"/>
    <property type="match status" value="2"/>
</dbReference>
<dbReference type="Pfam" id="PF00397">
    <property type="entry name" value="WW"/>
    <property type="match status" value="1"/>
</dbReference>
<dbReference type="SMART" id="SM00462">
    <property type="entry name" value="PTB"/>
    <property type="match status" value="2"/>
</dbReference>
<dbReference type="SMART" id="SM00456">
    <property type="entry name" value="WW"/>
    <property type="match status" value="1"/>
</dbReference>
<dbReference type="SUPFAM" id="SSF50729">
    <property type="entry name" value="PH domain-like"/>
    <property type="match status" value="2"/>
</dbReference>
<dbReference type="SUPFAM" id="SSF51045">
    <property type="entry name" value="WW domain"/>
    <property type="match status" value="1"/>
</dbReference>
<dbReference type="PROSITE" id="PS01179">
    <property type="entry name" value="PID"/>
    <property type="match status" value="2"/>
</dbReference>
<dbReference type="PROSITE" id="PS01159">
    <property type="entry name" value="WW_DOMAIN_1"/>
    <property type="match status" value="1"/>
</dbReference>
<dbReference type="PROSITE" id="PS50020">
    <property type="entry name" value="WW_DOMAIN_2"/>
    <property type="match status" value="1"/>
</dbReference>
<name>APBB1_HUMAN</name>
<gene>
    <name evidence="24" type="primary">APBB1</name>
    <name evidence="22" type="synonym">FE65</name>
    <name evidence="24" type="synonym">RIR</name>
</gene>
<keyword id="KW-0002">3D-structure</keyword>
<keyword id="KW-0007">Acetylation</keyword>
<keyword id="KW-0010">Activator</keyword>
<keyword id="KW-0025">Alternative splicing</keyword>
<keyword id="KW-0053">Apoptosis</keyword>
<keyword id="KW-1003">Cell membrane</keyword>
<keyword id="KW-0966">Cell projection</keyword>
<keyword id="KW-0156">Chromatin regulator</keyword>
<keyword id="KW-0963">Cytoplasm</keyword>
<keyword id="KW-0227">DNA damage</keyword>
<keyword id="KW-0472">Membrane</keyword>
<keyword id="KW-0539">Nucleus</keyword>
<keyword id="KW-0597">Phosphoprotein</keyword>
<keyword id="KW-1267">Proteomics identification</keyword>
<keyword id="KW-1185">Reference proteome</keyword>
<keyword id="KW-0677">Repeat</keyword>
<keyword id="KW-0678">Repressor</keyword>
<keyword id="KW-0804">Transcription</keyword>
<keyword id="KW-0805">Transcription regulation</keyword>
<keyword id="KW-0832">Ubl conjugation</keyword>
<organism>
    <name type="scientific">Homo sapiens</name>
    <name type="common">Human</name>
    <dbReference type="NCBI Taxonomy" id="9606"/>
    <lineage>
        <taxon>Eukaryota</taxon>
        <taxon>Metazoa</taxon>
        <taxon>Chordata</taxon>
        <taxon>Craniata</taxon>
        <taxon>Vertebrata</taxon>
        <taxon>Euteleostomi</taxon>
        <taxon>Mammalia</taxon>
        <taxon>Eutheria</taxon>
        <taxon>Euarchontoglires</taxon>
        <taxon>Primates</taxon>
        <taxon>Haplorrhini</taxon>
        <taxon>Catarrhini</taxon>
        <taxon>Hominidae</taxon>
        <taxon>Homo</taxon>
    </lineage>
</organism>
<sequence length="710" mass="77244">MSVPSSLSQSAINANSHGGPALSLPLPLHAAHNQLLNAKLQATAVGPKDLRSAMGEGGGPEPGPANAKWLKEGQNQLRRAATAHRDQNRNVTLTLAEEASQEPEMAPLGPKGLIHLYSELELSAHNAANRGLRGPGLIISTQEQGPDEGEEKAAGEAEEEEEDDDDEEEEEDLSSPPGLPEPLESVEAPPRPQALTDGPREHSKSASLLFGMRNSAASDEDSSWATLSQGSPSYGSPEDTDSFWNPNAFETDSDLPAGWMRVQDTSGTYYWHIPTGTTQWEPPGRASPSQGSSPQEESQLTWTGFAHGEGFEDGEFWKDEPSDEAPMELGLKEPEEGTLTFPAQSLSPEPLPQEEEKLPPRNTNPGIKCFAVRSLGWVEMTEEELAPGRSSVAVNNCIRQLSYHKNNLHDPMSGGWGEGKDLLLQLEDETLKLVEPQSQALLHAQPIISIRVWGVGRDSGRERDFAYVARDKLTQMLKCHVFRCEAPAKNIATSLHEICSKIMAERRNARCLVNGLSLDHSKLVDVPFQVEFPAPKNELVQKFQVYYLGNVPVAKPVGVDVINGALESVLSSSSREQWTPSHVSVAPATLTILHQQTEAVLGECRVRFLSFLAVGRDVHTFAFIMAAGPASFCCHMFWCEPNAASLSEAVQAACMLRYQKCLDARSQASTSCLPAPPAESVARRVGWTVRRGVQSLWGSLKPKRLGAHTP</sequence>
<feature type="chain" id="PRO_0000076049" description="Amyloid beta precursor protein binding family B member 1">
    <location>
        <begin position="1"/>
        <end position="710"/>
    </location>
</feature>
<feature type="domain" description="WW" evidence="4">
    <location>
        <begin position="253"/>
        <end position="285"/>
    </location>
</feature>
<feature type="domain" description="PID 1" evidence="3">
    <location>
        <begin position="370"/>
        <end position="509"/>
    </location>
</feature>
<feature type="domain" description="PID 2" evidence="3">
    <location>
        <begin position="542"/>
        <end position="699"/>
    </location>
</feature>
<feature type="region of interest" description="Disordered" evidence="5">
    <location>
        <begin position="1"/>
        <end position="24"/>
    </location>
</feature>
<feature type="region of interest" description="Disordered" evidence="5">
    <location>
        <begin position="131"/>
        <end position="254"/>
    </location>
</feature>
<feature type="region of interest" description="Disordered" evidence="5">
    <location>
        <begin position="276"/>
        <end position="299"/>
    </location>
</feature>
<feature type="region of interest" description="Disordered" evidence="5">
    <location>
        <begin position="340"/>
        <end position="365"/>
    </location>
</feature>
<feature type="compositionally biased region" description="Polar residues" evidence="5">
    <location>
        <begin position="1"/>
        <end position="15"/>
    </location>
</feature>
<feature type="compositionally biased region" description="Acidic residues" evidence="5">
    <location>
        <begin position="145"/>
        <end position="173"/>
    </location>
</feature>
<feature type="compositionally biased region" description="Polar residues" evidence="5">
    <location>
        <begin position="223"/>
        <end position="234"/>
    </location>
</feature>
<feature type="compositionally biased region" description="Low complexity" evidence="5">
    <location>
        <begin position="287"/>
        <end position="299"/>
    </location>
</feature>
<feature type="modified residue" description="N6-acetyllysine" evidence="16">
    <location>
        <position position="204"/>
    </location>
</feature>
<feature type="modified residue" description="Phosphoserine; by PKC" evidence="17">
    <location>
        <position position="459"/>
    </location>
</feature>
<feature type="modified residue" description="Phosphoserine" evidence="2">
    <location>
        <position position="517"/>
    </location>
</feature>
<feature type="modified residue" description="Phosphotyrosine; by ABL1" evidence="6 11">
    <location>
        <position position="547"/>
    </location>
</feature>
<feature type="modified residue" description="Phosphoserine; by SGK1" evidence="1">
    <location>
        <position position="610"/>
    </location>
</feature>
<feature type="modified residue" description="N6-acetyllysine" evidence="16">
    <location>
        <position position="701"/>
    </location>
</feature>
<feature type="splice variant" id="VSP_047459" description="In isoform 4." evidence="18 21">
    <location>
        <begin position="1"/>
        <end position="259"/>
    </location>
</feature>
<feature type="splice variant" id="VSP_054709" description="In isoform 6." evidence="18">
    <original>MSVPSSLSQSAINANSHGGPALSLPLPLHAAHNQLLNAKLQATAVGPKDLRSAMGEGGGPEPGPANAKWLKEGQNQLRRAATAHRDQNRNVTLTLAEEASQEPEMAPLGPKGLIHLYSELELSAHNAANRGLRGPGLIISTQEQGPDEGEEKAAGEAEEEEEDDDDEEEEEDLSSPPGLPEPLESVEAPPRPQALTDGPREHSKSASLLFGMRNSAASDEDSSWATLSQGSPSYGSPEDT</original>
    <variation>MTQMR</variation>
    <location>
        <begin position="1"/>
        <end position="240"/>
    </location>
</feature>
<feature type="splice variant" id="VSP_045326" description="In isoform 3 and isoform 5." evidence="18 20">
    <location>
        <begin position="1"/>
        <end position="213"/>
    </location>
</feature>
<feature type="splice variant" id="VSP_045327" description="In isoform 3 and isoform 5." evidence="18 20">
    <original>NSAASDEDSSWATLSQGSPSYGSPEDT</original>
    <variation>MSAMFSQDFFLAIILQDSSA</variation>
    <location>
        <begin position="214"/>
        <end position="240"/>
    </location>
</feature>
<feature type="splice variant" id="VSP_011658" description="In isoform 2 and isoform 3." evidence="18 19">
    <location>
        <begin position="462"/>
        <end position="463"/>
    </location>
</feature>
<feature type="sequence variant" id="VAR_014444" description="In dbSNP:rs1800423.">
    <original>M</original>
    <variation>V</variation>
    <location>
        <position position="327"/>
    </location>
</feature>
<feature type="sequence variant" id="VAR_014445" description="In dbSNP:rs1800425.">
    <original>N</original>
    <variation>S</variation>
    <location>
        <position position="396"/>
    </location>
</feature>
<feature type="mutagenesis site" description="No effect on phosphorylation by ABL1." evidence="6">
    <original>Y</original>
    <variation>F</variation>
    <location>
        <position position="117"/>
    </location>
</feature>
<feature type="mutagenesis site" description="Mimics acetylation; leading to increased transcription activator activity; when associated with Q-701." evidence="16">
    <original>K</original>
    <variation>Q</variation>
    <location>
        <position position="204"/>
    </location>
</feature>
<feature type="mutagenesis site" description="Abolished acetylation by KAT5, leading to decreased transcription activator activity; when associated with R-701." evidence="16">
    <original>K</original>
    <variation>R</variation>
    <location>
        <position position="204"/>
    </location>
</feature>
<feature type="mutagenesis site" description="No effect on phosphorylation by ABL1." evidence="6">
    <original>Y</original>
    <variation>F</variation>
    <location>
        <position position="234"/>
    </location>
</feature>
<feature type="mutagenesis site" description="Impairs transcriptional activation and inhibits binding to ABL1." evidence="6">
    <original>YYW</original>
    <variation>AAA</variation>
    <location>
        <begin position="269"/>
        <end position="271"/>
    </location>
</feature>
<feature type="mutagenesis site" description="No effect on phosphorylation by ABL1." evidence="6">
    <original>Y</original>
    <variation>F</variation>
    <location>
        <position position="269"/>
    </location>
</feature>
<feature type="mutagenesis site" description="No effect on phosphorylation by ABL1." evidence="6">
    <original>Y</original>
    <variation>F</variation>
    <location>
        <position position="270"/>
    </location>
</feature>
<feature type="mutagenesis site" description="No effect on phosphorylation by ABL1." evidence="6">
    <original>Y</original>
    <variation>F</variation>
    <location>
        <position position="403"/>
    </location>
</feature>
<feature type="mutagenesis site" description="Loss of PKC-mediated phosphorylation." evidence="17">
    <original>S</original>
    <variation>A</variation>
    <location>
        <position position="459"/>
    </location>
</feature>
<feature type="mutagenesis site" description="Increased activation of the RAC1-ARF6 axis." evidence="17">
    <original>S</original>
    <variation>E</variation>
    <location>
        <position position="459"/>
    </location>
</feature>
<feature type="mutagenesis site" description="No effect on phosphorylation by ABL1." evidence="6">
    <original>Y</original>
    <variation>F</variation>
    <location>
        <position position="467"/>
    </location>
</feature>
<feature type="mutagenesis site" description="No effect on phosphorylation by ABL1." evidence="6">
    <original>Y</original>
    <variation>F</variation>
    <location>
        <position position="546"/>
    </location>
</feature>
<feature type="mutagenesis site" description="Abrogates phosphorylation and stimulation of transcription by ABL1, and increases the interaction with RASD1/DEXRAS1." evidence="6 11">
    <original>Y</original>
    <variation>F</variation>
    <location>
        <position position="547"/>
    </location>
</feature>
<feature type="mutagenesis site" description="No effect on phosphorylation by ABL1." evidence="6">
    <original>Y</original>
    <variation>F</variation>
    <location>
        <position position="658"/>
    </location>
</feature>
<feature type="mutagenesis site" description="Mimics acetylation; leading to increased transcription activator activity; when associated with Q-204." evidence="16">
    <original>K</original>
    <variation>Q</variation>
    <location>
        <position position="701"/>
    </location>
</feature>
<feature type="mutagenesis site" description="Abolished acetylation by KAT5, leading to decreased transcription activator activity; when associated with R-204." evidence="16">
    <original>K</original>
    <variation>R</variation>
    <location>
        <position position="701"/>
    </location>
</feature>
<feature type="sequence conflict" description="In Ref. 4; BAH11532." evidence="23" ref="4">
    <original>I</original>
    <variation>T</variation>
    <location>
        <position position="367"/>
    </location>
</feature>
<feature type="sequence conflict" description="In Ref. 4; BAH11532." evidence="23" ref="4">
    <original>T</original>
    <variation>A</variation>
    <location>
        <position position="493"/>
    </location>
</feature>
<feature type="strand" evidence="25">
    <location>
        <begin position="259"/>
        <end position="263"/>
    </location>
</feature>
<feature type="strand" evidence="25">
    <location>
        <begin position="268"/>
        <end position="272"/>
    </location>
</feature>
<feature type="turn" evidence="25">
    <location>
        <begin position="273"/>
        <end position="275"/>
    </location>
</feature>
<feature type="strand" evidence="25">
    <location>
        <begin position="278"/>
        <end position="281"/>
    </location>
</feature>
<feature type="strand" evidence="26">
    <location>
        <begin position="368"/>
        <end position="379"/>
    </location>
</feature>
<feature type="helix" evidence="26">
    <location>
        <begin position="382"/>
        <end position="385"/>
    </location>
</feature>
<feature type="turn" evidence="26">
    <location>
        <begin position="387"/>
        <end position="389"/>
    </location>
</feature>
<feature type="helix" evidence="26">
    <location>
        <begin position="390"/>
        <end position="401"/>
    </location>
</feature>
<feature type="strand" evidence="26">
    <location>
        <begin position="421"/>
        <end position="427"/>
    </location>
</feature>
<feature type="strand" evidence="26">
    <location>
        <begin position="430"/>
        <end position="434"/>
    </location>
</feature>
<feature type="turn" evidence="26">
    <location>
        <begin position="436"/>
        <end position="438"/>
    </location>
</feature>
<feature type="strand" evidence="26">
    <location>
        <begin position="441"/>
        <end position="446"/>
    </location>
</feature>
<feature type="helix" evidence="26">
    <location>
        <begin position="447"/>
        <end position="449"/>
    </location>
</feature>
<feature type="strand" evidence="26">
    <location>
        <begin position="452"/>
        <end position="455"/>
    </location>
</feature>
<feature type="strand" evidence="27">
    <location>
        <begin position="458"/>
        <end position="460"/>
    </location>
</feature>
<feature type="strand" evidence="26">
    <location>
        <begin position="464"/>
        <end position="470"/>
    </location>
</feature>
<feature type="turn" evidence="26">
    <location>
        <begin position="472"/>
        <end position="474"/>
    </location>
</feature>
<feature type="strand" evidence="26">
    <location>
        <begin position="477"/>
        <end position="486"/>
    </location>
</feature>
<feature type="helix" evidence="26">
    <location>
        <begin position="488"/>
        <end position="504"/>
    </location>
</feature>
<feature type="strand" evidence="28">
    <location>
        <begin position="544"/>
        <end position="554"/>
    </location>
</feature>
<feature type="helix" evidence="28">
    <location>
        <begin position="559"/>
        <end position="571"/>
    </location>
</feature>
<feature type="helix" evidence="28">
    <location>
        <begin position="575"/>
        <end position="577"/>
    </location>
</feature>
<feature type="strand" evidence="28">
    <location>
        <begin position="579"/>
        <end position="585"/>
    </location>
</feature>
<feature type="strand" evidence="28">
    <location>
        <begin position="587"/>
        <end position="594"/>
    </location>
</feature>
<feature type="turn" evidence="28">
    <location>
        <begin position="595"/>
        <end position="597"/>
    </location>
</feature>
<feature type="strand" evidence="28">
    <location>
        <begin position="600"/>
        <end position="605"/>
    </location>
</feature>
<feature type="helix" evidence="28">
    <location>
        <begin position="606"/>
        <end position="608"/>
    </location>
</feature>
<feature type="strand" evidence="28">
    <location>
        <begin position="609"/>
        <end position="614"/>
    </location>
</feature>
<feature type="strand" evidence="28">
    <location>
        <begin position="620"/>
        <end position="628"/>
    </location>
</feature>
<feature type="strand" evidence="28">
    <location>
        <begin position="631"/>
        <end position="641"/>
    </location>
</feature>
<feature type="helix" evidence="28">
    <location>
        <begin position="644"/>
        <end position="665"/>
    </location>
</feature>
<protein>
    <recommendedName>
        <fullName evidence="24">Amyloid beta precursor protein binding family B member 1</fullName>
    </recommendedName>
    <alternativeName>
        <fullName evidence="2">Amyloid-beta A4 precursor protein-binding family B member 1</fullName>
    </alternativeName>
    <alternativeName>
        <fullName evidence="2">Protein Fe65</fullName>
    </alternativeName>
</protein>
<proteinExistence type="evidence at protein level"/>
<evidence type="ECO:0000250" key="1">
    <source>
        <dbReference type="UniProtKB" id="P46933"/>
    </source>
</evidence>
<evidence type="ECO:0000250" key="2">
    <source>
        <dbReference type="UniProtKB" id="Q9QXJ1"/>
    </source>
</evidence>
<evidence type="ECO:0000255" key="3">
    <source>
        <dbReference type="PROSITE-ProRule" id="PRU00148"/>
    </source>
</evidence>
<evidence type="ECO:0000255" key="4">
    <source>
        <dbReference type="PROSITE-ProRule" id="PRU00224"/>
    </source>
</evidence>
<evidence type="ECO:0000256" key="5">
    <source>
        <dbReference type="SAM" id="MobiDB-lite"/>
    </source>
</evidence>
<evidence type="ECO:0000269" key="6">
    <source>
    </source>
</evidence>
<evidence type="ECO:0000269" key="7">
    <source>
    </source>
</evidence>
<evidence type="ECO:0000269" key="8">
    <source>
    </source>
</evidence>
<evidence type="ECO:0000269" key="9">
    <source>
    </source>
</evidence>
<evidence type="ECO:0000269" key="10">
    <source>
    </source>
</evidence>
<evidence type="ECO:0000269" key="11">
    <source>
    </source>
</evidence>
<evidence type="ECO:0000269" key="12">
    <source>
    </source>
</evidence>
<evidence type="ECO:0000269" key="13">
    <source>
    </source>
</evidence>
<evidence type="ECO:0000269" key="14">
    <source>
    </source>
</evidence>
<evidence type="ECO:0000269" key="15">
    <source>
    </source>
</evidence>
<evidence type="ECO:0000269" key="16">
    <source>
    </source>
</evidence>
<evidence type="ECO:0000269" key="17">
    <source>
    </source>
</evidence>
<evidence type="ECO:0000303" key="18">
    <source>
    </source>
</evidence>
<evidence type="ECO:0000303" key="19">
    <source>
    </source>
</evidence>
<evidence type="ECO:0000303" key="20">
    <source>
    </source>
</evidence>
<evidence type="ECO:0000303" key="21">
    <source>
    </source>
</evidence>
<evidence type="ECO:0000303" key="22">
    <source>
    </source>
</evidence>
<evidence type="ECO:0000305" key="23"/>
<evidence type="ECO:0000312" key="24">
    <source>
        <dbReference type="HGNC" id="HGNC:581"/>
    </source>
</evidence>
<evidence type="ECO:0007829" key="25">
    <source>
        <dbReference type="PDB" id="2HO2"/>
    </source>
</evidence>
<evidence type="ECO:0007829" key="26">
    <source>
        <dbReference type="PDB" id="3D8D"/>
    </source>
</evidence>
<evidence type="ECO:0007829" key="27">
    <source>
        <dbReference type="PDB" id="3D8F"/>
    </source>
</evidence>
<evidence type="ECO:0007829" key="28">
    <source>
        <dbReference type="PDB" id="3DXE"/>
    </source>
</evidence>
<reference key="1">
    <citation type="journal article" date="1996" name="Hum. Mol. Genet.">
        <title>cDNA cloning and chromosome mapping of the human Fe65 gene: interaction of the conserved cytoplasmic domains of the human beta-amyloid precursor protein and its homologues with the mouse Fe65 protein.</title>
        <authorList>
            <person name="Bressler S.L."/>
            <person name="Gray M.D."/>
            <person name="Sopher B.L."/>
            <person name="Hu Q."/>
            <person name="Hearn M.G."/>
            <person name="Pham D.G."/>
            <person name="Dinulos M.B."/>
            <person name="Fukuchi K."/>
            <person name="Sisodia S.S."/>
            <person name="Miller M.A."/>
            <person name="Disteche C.M."/>
            <person name="Martin G.M."/>
        </authorList>
    </citation>
    <scope>NUCLEOTIDE SEQUENCE [GENOMIC DNA / MRNA] (ISOFORM 1)</scope>
    <source>
        <tissue>Brain</tissue>
    </source>
</reference>
<reference key="2">
    <citation type="journal article" date="1998" name="Hum. Genet.">
        <title>The human FE65 gene: genomic structure and an intronic biallelic polymorphism associated with sporadic dementia of the Alzheimer type.</title>
        <authorList>
            <person name="Hu Q."/>
            <person name="Kukull W.A."/>
            <person name="Bressler S.L."/>
            <person name="Gray M.D."/>
            <person name="Cam J.A."/>
            <person name="Larson E.B."/>
            <person name="Martin G.M."/>
            <person name="Deeb S.S."/>
        </authorList>
    </citation>
    <scope>NUCLEOTIDE SEQUENCE [GENOMIC DNA] (ISOFORM 1)</scope>
    <source>
        <tissue>Brain</tissue>
    </source>
</reference>
<reference key="3">
    <citation type="journal article" date="2011" name="J. Neurochem.">
        <title>Identification and characterization of a neuronal enriched novel transcript encoding the previously described p60Fe65 isoform.</title>
        <authorList>
            <person name="Domingues S.C."/>
            <person name="Henriques A.G."/>
            <person name="Fardilha M."/>
            <person name="da Cruz E Silva E.F."/>
            <person name="da Cruz E Silva O.A."/>
        </authorList>
    </citation>
    <scope>NUCLEOTIDE SEQUENCE [MRNA] (ISOFORM 4)</scope>
    <scope>TISSUE SPECIFICITY</scope>
    <source>
        <tissue>Brain</tissue>
    </source>
</reference>
<reference key="4">
    <citation type="journal article" date="2004" name="Nat. Genet.">
        <title>Complete sequencing and characterization of 21,243 full-length human cDNAs.</title>
        <authorList>
            <person name="Ota T."/>
            <person name="Suzuki Y."/>
            <person name="Nishikawa T."/>
            <person name="Otsuki T."/>
            <person name="Sugiyama T."/>
            <person name="Irie R."/>
            <person name="Wakamatsu A."/>
            <person name="Hayashi K."/>
            <person name="Sato H."/>
            <person name="Nagai K."/>
            <person name="Kimura K."/>
            <person name="Makita H."/>
            <person name="Sekine M."/>
            <person name="Obayashi M."/>
            <person name="Nishi T."/>
            <person name="Shibahara T."/>
            <person name="Tanaka T."/>
            <person name="Ishii S."/>
            <person name="Yamamoto J."/>
            <person name="Saito K."/>
            <person name="Kawai Y."/>
            <person name="Isono Y."/>
            <person name="Nakamura Y."/>
            <person name="Nagahari K."/>
            <person name="Murakami K."/>
            <person name="Yasuda T."/>
            <person name="Iwayanagi T."/>
            <person name="Wagatsuma M."/>
            <person name="Shiratori A."/>
            <person name="Sudo H."/>
            <person name="Hosoiri T."/>
            <person name="Kaku Y."/>
            <person name="Kodaira H."/>
            <person name="Kondo H."/>
            <person name="Sugawara M."/>
            <person name="Takahashi M."/>
            <person name="Kanda K."/>
            <person name="Yokoi T."/>
            <person name="Furuya T."/>
            <person name="Kikkawa E."/>
            <person name="Omura Y."/>
            <person name="Abe K."/>
            <person name="Kamihara K."/>
            <person name="Katsuta N."/>
            <person name="Sato K."/>
            <person name="Tanikawa M."/>
            <person name="Yamazaki M."/>
            <person name="Ninomiya K."/>
            <person name="Ishibashi T."/>
            <person name="Yamashita H."/>
            <person name="Murakawa K."/>
            <person name="Fujimori K."/>
            <person name="Tanai H."/>
            <person name="Kimata M."/>
            <person name="Watanabe M."/>
            <person name="Hiraoka S."/>
            <person name="Chiba Y."/>
            <person name="Ishida S."/>
            <person name="Ono Y."/>
            <person name="Takiguchi S."/>
            <person name="Watanabe S."/>
            <person name="Yosida M."/>
            <person name="Hotuta T."/>
            <person name="Kusano J."/>
            <person name="Kanehori K."/>
            <person name="Takahashi-Fujii A."/>
            <person name="Hara H."/>
            <person name="Tanase T.-O."/>
            <person name="Nomura Y."/>
            <person name="Togiya S."/>
            <person name="Komai F."/>
            <person name="Hara R."/>
            <person name="Takeuchi K."/>
            <person name="Arita M."/>
            <person name="Imose N."/>
            <person name="Musashino K."/>
            <person name="Yuuki H."/>
            <person name="Oshima A."/>
            <person name="Sasaki N."/>
            <person name="Aotsuka S."/>
            <person name="Yoshikawa Y."/>
            <person name="Matsunawa H."/>
            <person name="Ichihara T."/>
            <person name="Shiohata N."/>
            <person name="Sano S."/>
            <person name="Moriya S."/>
            <person name="Momiyama H."/>
            <person name="Satoh N."/>
            <person name="Takami S."/>
            <person name="Terashima Y."/>
            <person name="Suzuki O."/>
            <person name="Nakagawa S."/>
            <person name="Senoh A."/>
            <person name="Mizoguchi H."/>
            <person name="Goto Y."/>
            <person name="Shimizu F."/>
            <person name="Wakebe H."/>
            <person name="Hishigaki H."/>
            <person name="Watanabe T."/>
            <person name="Sugiyama A."/>
            <person name="Takemoto M."/>
            <person name="Kawakami B."/>
            <person name="Yamazaki M."/>
            <person name="Watanabe K."/>
            <person name="Kumagai A."/>
            <person name="Itakura S."/>
            <person name="Fukuzumi Y."/>
            <person name="Fujimori Y."/>
            <person name="Komiyama M."/>
            <person name="Tashiro H."/>
            <person name="Tanigami A."/>
            <person name="Fujiwara T."/>
            <person name="Ono T."/>
            <person name="Yamada K."/>
            <person name="Fujii Y."/>
            <person name="Ozaki K."/>
            <person name="Hirao M."/>
            <person name="Ohmori Y."/>
            <person name="Kawabata A."/>
            <person name="Hikiji T."/>
            <person name="Kobatake N."/>
            <person name="Inagaki H."/>
            <person name="Ikema Y."/>
            <person name="Okamoto S."/>
            <person name="Okitani R."/>
            <person name="Kawakami T."/>
            <person name="Noguchi S."/>
            <person name="Itoh T."/>
            <person name="Shigeta K."/>
            <person name="Senba T."/>
            <person name="Matsumura K."/>
            <person name="Nakajima Y."/>
            <person name="Mizuno T."/>
            <person name="Morinaga M."/>
            <person name="Sasaki M."/>
            <person name="Togashi T."/>
            <person name="Oyama M."/>
            <person name="Hata H."/>
            <person name="Watanabe M."/>
            <person name="Komatsu T."/>
            <person name="Mizushima-Sugano J."/>
            <person name="Satoh T."/>
            <person name="Shirai Y."/>
            <person name="Takahashi Y."/>
            <person name="Nakagawa K."/>
            <person name="Okumura K."/>
            <person name="Nagase T."/>
            <person name="Nomura N."/>
            <person name="Kikuchi H."/>
            <person name="Masuho Y."/>
            <person name="Yamashita R."/>
            <person name="Nakai K."/>
            <person name="Yada T."/>
            <person name="Nakamura Y."/>
            <person name="Ohara O."/>
            <person name="Isogai T."/>
            <person name="Sugano S."/>
        </authorList>
    </citation>
    <scope>NUCLEOTIDE SEQUENCE [LARGE SCALE MRNA] (ISOFORMS 3; 4 AND 6)</scope>
    <source>
        <tissue>Caudate nucleus</tissue>
        <tissue>Cerebellum</tissue>
    </source>
</reference>
<reference key="5">
    <citation type="journal article" date="2007" name="BMC Genomics">
        <title>The full-ORF clone resource of the German cDNA consortium.</title>
        <authorList>
            <person name="Bechtel S."/>
            <person name="Rosenfelder H."/>
            <person name="Duda A."/>
            <person name="Schmidt C.P."/>
            <person name="Ernst U."/>
            <person name="Wellenreuther R."/>
            <person name="Mehrle A."/>
            <person name="Schuster C."/>
            <person name="Bahr A."/>
            <person name="Bloecker H."/>
            <person name="Heubner D."/>
            <person name="Hoerlein A."/>
            <person name="Michel G."/>
            <person name="Wedler H."/>
            <person name="Koehrer K."/>
            <person name="Ottenwaelder B."/>
            <person name="Poustka A."/>
            <person name="Wiemann S."/>
            <person name="Schupp I."/>
        </authorList>
    </citation>
    <scope>NUCLEOTIDE SEQUENCE [LARGE SCALE MRNA] (ISOFORM 5)</scope>
    <source>
        <tissue>Fetal brain</tissue>
    </source>
</reference>
<reference key="6">
    <citation type="journal article" date="2006" name="Nature">
        <title>Human chromosome 11 DNA sequence and analysis including novel gene identification.</title>
        <authorList>
            <person name="Taylor T.D."/>
            <person name="Noguchi H."/>
            <person name="Totoki Y."/>
            <person name="Toyoda A."/>
            <person name="Kuroki Y."/>
            <person name="Dewar K."/>
            <person name="Lloyd C."/>
            <person name="Itoh T."/>
            <person name="Takeda T."/>
            <person name="Kim D.-W."/>
            <person name="She X."/>
            <person name="Barlow K.F."/>
            <person name="Bloom T."/>
            <person name="Bruford E."/>
            <person name="Chang J.L."/>
            <person name="Cuomo C.A."/>
            <person name="Eichler E."/>
            <person name="FitzGerald M.G."/>
            <person name="Jaffe D.B."/>
            <person name="LaButti K."/>
            <person name="Nicol R."/>
            <person name="Park H.-S."/>
            <person name="Seaman C."/>
            <person name="Sougnez C."/>
            <person name="Yang X."/>
            <person name="Zimmer A.R."/>
            <person name="Zody M.C."/>
            <person name="Birren B.W."/>
            <person name="Nusbaum C."/>
            <person name="Fujiyama A."/>
            <person name="Hattori M."/>
            <person name="Rogers J."/>
            <person name="Lander E.S."/>
            <person name="Sakaki Y."/>
        </authorList>
    </citation>
    <scope>NUCLEOTIDE SEQUENCE [LARGE SCALE GENOMIC DNA]</scope>
</reference>
<reference key="7">
    <citation type="submission" date="2005-09" db="EMBL/GenBank/DDBJ databases">
        <authorList>
            <person name="Mural R.J."/>
            <person name="Istrail S."/>
            <person name="Sutton G.G."/>
            <person name="Florea L."/>
            <person name="Halpern A.L."/>
            <person name="Mobarry C.M."/>
            <person name="Lippert R."/>
            <person name="Walenz B."/>
            <person name="Shatkay H."/>
            <person name="Dew I."/>
            <person name="Miller J.R."/>
            <person name="Flanigan M.J."/>
            <person name="Edwards N.J."/>
            <person name="Bolanos R."/>
            <person name="Fasulo D."/>
            <person name="Halldorsson B.V."/>
            <person name="Hannenhalli S."/>
            <person name="Turner R."/>
            <person name="Yooseph S."/>
            <person name="Lu F."/>
            <person name="Nusskern D.R."/>
            <person name="Shue B.C."/>
            <person name="Zheng X.H."/>
            <person name="Zhong F."/>
            <person name="Delcher A.L."/>
            <person name="Huson D.H."/>
            <person name="Kravitz S.A."/>
            <person name="Mouchard L."/>
            <person name="Reinert K."/>
            <person name="Remington K.A."/>
            <person name="Clark A.G."/>
            <person name="Waterman M.S."/>
            <person name="Eichler E.E."/>
            <person name="Adams M.D."/>
            <person name="Hunkapiller M.W."/>
            <person name="Myers E.W."/>
            <person name="Venter J.C."/>
        </authorList>
    </citation>
    <scope>NUCLEOTIDE SEQUENCE [LARGE SCALE GENOMIC DNA]</scope>
</reference>
<reference key="8">
    <citation type="journal article" date="2004" name="Genome Res.">
        <title>The status, quality, and expansion of the NIH full-length cDNA project: the Mammalian Gene Collection (MGC).</title>
        <authorList>
            <consortium name="The MGC Project Team"/>
        </authorList>
    </citation>
    <scope>NUCLEOTIDE SEQUENCE [LARGE SCALE MRNA] (ISOFORM 2)</scope>
    <source>
        <tissue>Uterus</tissue>
    </source>
</reference>
<reference key="9">
    <citation type="journal article" date="2004" name="J. Biol. Chem.">
        <title>The c-Abl tyrosine kinase phosphorylates the Fe65 adaptor protein to stimulate Fe65/amyloid precursor protein nuclear signaling.</title>
        <authorList>
            <person name="Perkinton M.S."/>
            <person name="Standen C.L."/>
            <person name="Lau K.F."/>
            <person name="Kesavapany S."/>
            <person name="Byers H.L."/>
            <person name="Ward M."/>
            <person name="McLoughlin D.M."/>
            <person name="Miller C.C."/>
        </authorList>
    </citation>
    <scope>FUNCTION</scope>
    <scope>INTERACTION WITH ABL1</scope>
    <scope>SUBCELLULAR LOCATION</scope>
    <scope>PHOSPHORYLATION AT TYR-547 BY ABL1</scope>
    <scope>MUTAGENESIS OF TYR-117; TYR-234; TYR-269; TYR-270; TYR-403; TYR-467; 269-TYR--TRP-271; TYR-546; TYR-547 AND TYR-658</scope>
</reference>
<reference key="10">
    <citation type="journal article" date="2007" name="Biochem. Biophys. Res. Commun.">
        <title>Human NIMA-related kinase 6 is one of the Fe65 WW domain binding proteins.</title>
        <authorList>
            <person name="Lee E.J."/>
            <person name="Hyun S.H."/>
            <person name="Chun J."/>
            <person name="Kang S.S."/>
        </authorList>
    </citation>
    <scope>SUBCELLULAR LOCATION</scope>
    <scope>INTERACTION WITH NEK6</scope>
</reference>
<reference key="11">
    <citation type="journal article" date="2008" name="J. Biol. Chem.">
        <title>Regulation of FE65 nuclear translocation and function by amyloid beta-protein precursor in osmotically stressed cells.</title>
        <authorList>
            <person name="Nakaya T."/>
            <person name="Kawai T."/>
            <person name="Suzuki T."/>
        </authorList>
    </citation>
    <scope>FUNCTION</scope>
    <scope>SUBCELLULAR LOCATION</scope>
    <scope>INTERACTION WITH APP</scope>
</reference>
<reference key="12">
    <citation type="journal article" date="2008" name="J. Biol. Chem.">
        <title>Dexras1 interacts with FE65 to regulate FE65-amyloid precursor protein-dependent transcription.</title>
        <authorList>
            <person name="Lau K.-F."/>
            <person name="Chan W.-M."/>
            <person name="Perkinton M.S."/>
            <person name="Tudor E.L."/>
            <person name="Chang R.C.C."/>
            <person name="Chan H.-Y."/>
            <person name="McLoughlin D.M."/>
            <person name="Miller C.C.J."/>
        </authorList>
    </citation>
    <scope>FUNCTION</scope>
    <scope>SUBCELLULAR LOCATION</scope>
    <scope>PHOSPHORYLATION AT TYR-547</scope>
    <scope>INTERACTION WITH RASD1</scope>
    <scope>MUTAGENESIS OF TYR-547</scope>
</reference>
<reference key="13">
    <citation type="journal article" date="2009" name="Nature">
        <title>Tyrosine dephosphorylation of H2AX modulates apoptosis and survival decisions.</title>
        <authorList>
            <person name="Cook P.J."/>
            <person name="Ju B.G."/>
            <person name="Telese F."/>
            <person name="Wang X."/>
            <person name="Glass C.K."/>
            <person name="Rosenfeld M.G."/>
        </authorList>
    </citation>
    <scope>FUNCTION</scope>
    <scope>INTERACTION WITH H2AX AND MAPK8</scope>
</reference>
<reference key="14">
    <citation type="journal article" date="2009" name="PLoS ONE">
        <title>FE65 binds Teashirt, inhibiting expression of the primate-specific caspase-4.</title>
        <authorList>
            <person name="Kajiwara Y."/>
            <person name="Akram A."/>
            <person name="Katsel P."/>
            <person name="Haroutunian V."/>
            <person name="Schmeidler J."/>
            <person name="Beecham G."/>
            <person name="Haines J.L."/>
            <person name="Pericak-Vance M.A."/>
            <person name="Buxbaum J.D."/>
        </authorList>
    </citation>
    <scope>FUNCTION</scope>
    <scope>INTERACTION WITH SET AND TSHZ3</scope>
    <scope>IDENTIFICATION IN A TRIMERIC COMPLEX WITH HDAC1 AND TSHZ3</scope>
    <scope>CHROMATIN-BINDING</scope>
    <scope>SUBCELLULAR LOCATION</scope>
    <scope>TISSUE SPECIFICITY</scope>
</reference>
<reference key="15">
    <citation type="journal article" date="2015" name="Cell Death Differ.">
        <title>Regulation of neuronal survival and morphology by the E3 ubiquitin ligase RNF157.</title>
        <authorList>
            <person name="Matz A."/>
            <person name="Lee S.J."/>
            <person name="Schwedhelm-Domeyer N."/>
            <person name="Zanini D."/>
            <person name="Holubowska A."/>
            <person name="Kannan M."/>
            <person name="Farnworth M."/>
            <person name="Jahn O."/>
            <person name="Goepfert M.C."/>
            <person name="Stegmueller J."/>
        </authorList>
    </citation>
    <scope>INTERACTION WITH RNF157</scope>
    <scope>UBIQUITINATION BY RNF157</scope>
    <scope>FUNCTION</scope>
</reference>
<reference key="16">
    <citation type="journal article" date="2021" name="Biol. Chem.">
        <title>Lysine acetyltransferase Tip60 acetylates the APP adaptor Fe65 to increase its transcriptional activity.</title>
        <authorList>
            <person name="Probst S."/>
            <person name="Riese F."/>
            <person name="Kaegi L."/>
            <person name="Krueger M."/>
            <person name="Russi N."/>
            <person name="Nitsch R.M."/>
            <person name="Konietzko U."/>
        </authorList>
    </citation>
    <scope>FUNCTION</scope>
    <scope>INTERACTION WITH KAT5</scope>
    <scope>ACETYLATION AT LYS-204 AND LYS-701</scope>
    <scope>MUTAGENESIS OF LYS-204 AND LYS-701</scope>
</reference>
<reference key="17">
    <citation type="journal article" date="2022" name="FASEB J.">
        <title>Insulin stimulates atypical protein kinase C-mediated phosphorylation of the neuronal adaptor FE65 to potentiate neurite outgrowth by activating ARF6-Rac1 signaling.</title>
        <authorList>
            <person name="Chau D.D."/>
            <person name="Li W."/>
            <person name="Chan W.W.R."/>
            <person name="Sun J.K."/>
            <person name="Zhai Y."/>
            <person name="Chow H.M."/>
            <person name="Lau K.F."/>
        </authorList>
    </citation>
    <scope>FUNCTION</scope>
    <scope>INTERACTION WITH ARF6</scope>
    <scope>MUTAGENESIS OF SER-459</scope>
    <scope>PHOSPHORYLATION AT SER-459</scope>
</reference>
<reference key="18">
    <citation type="journal article" date="2007" name="J. Mol. Biol.">
        <title>Structural basis for polyproline recognition by the FE65 WW domain.</title>
        <authorList>
            <person name="Meiyappan M."/>
            <person name="Birrane G."/>
            <person name="Ladias J.A.A."/>
        </authorList>
    </citation>
    <scope>X-RAY CRYSTALLOGRAPHY (1.33 ANGSTROMS) OF 253-289 IN COMPLEX WITH ENAH</scope>
</reference>
<reference key="19">
    <citation type="journal article" date="2008" name="EMBO Rep.">
        <title>Structure of the intracellular domain of the amyloid precursor protein in complex with Fe65-PTB2.</title>
        <authorList>
            <person name="Radzimanowski J."/>
            <person name="Simon B."/>
            <person name="Sattler M."/>
            <person name="Beyreuther K."/>
            <person name="Sinning I."/>
            <person name="Wild K."/>
        </authorList>
    </citation>
    <scope>X-RAY CRYSTALLOGRAPHY (2.0 ANGSTROMS) OF 534-667 IN COMPLEX WITH APP</scope>
</reference>
<reference key="20">
    <citation type="journal article" date="2008" name="J. Biol. Chem.">
        <title>Crystal structure of the human Fe65-PTB1 domain.</title>
        <authorList>
            <person name="Radzimanowski J."/>
            <person name="Ravaud S."/>
            <person name="Schlesinger S."/>
            <person name="Koch J."/>
            <person name="Beyreuther K."/>
            <person name="Sinning I."/>
            <person name="Wild K."/>
        </authorList>
    </citation>
    <scope>X-RAY CRYSTALLOGRAPHY (2.2 ANGSTROMS) OF 366-505</scope>
</reference>